<protein>
    <recommendedName>
        <fullName>Mitogen-activated protein kinase HOG1</fullName>
        <shortName>MAP kinase HOG1</shortName>
        <ecNumber evidence="3">2.7.11.24</ecNumber>
    </recommendedName>
</protein>
<keyword id="KW-0010">Activator</keyword>
<keyword id="KW-0067">ATP-binding</keyword>
<keyword id="KW-0963">Cytoplasm</keyword>
<keyword id="KW-0418">Kinase</keyword>
<keyword id="KW-0547">Nucleotide-binding</keyword>
<keyword id="KW-0539">Nucleus</keyword>
<keyword id="KW-0597">Phosphoprotein</keyword>
<keyword id="KW-0723">Serine/threonine-protein kinase</keyword>
<keyword id="KW-0804">Transcription</keyword>
<keyword id="KW-0805">Transcription regulation</keyword>
<keyword id="KW-0808">Transferase</keyword>
<feature type="chain" id="PRO_0000410193" description="Mitogen-activated protein kinase HOG1">
    <location>
        <begin position="1"/>
        <end position="365"/>
    </location>
</feature>
<feature type="domain" description="Protein kinase" evidence="5">
    <location>
        <begin position="20"/>
        <end position="299"/>
    </location>
</feature>
<feature type="short sequence motif" description="TXY">
    <location>
        <begin position="171"/>
        <end position="173"/>
    </location>
</feature>
<feature type="active site" description="Proton acceptor" evidence="5 6">
    <location>
        <position position="141"/>
    </location>
</feature>
<feature type="binding site" evidence="5">
    <location>
        <begin position="26"/>
        <end position="34"/>
    </location>
    <ligand>
        <name>ATP</name>
        <dbReference type="ChEBI" id="CHEBI:30616"/>
    </ligand>
</feature>
<feature type="binding site" evidence="5">
    <location>
        <position position="49"/>
    </location>
    <ligand>
        <name>ATP</name>
        <dbReference type="ChEBI" id="CHEBI:30616"/>
    </ligand>
</feature>
<feature type="modified residue" description="Phosphothreonine" evidence="1">
    <location>
        <position position="171"/>
    </location>
</feature>
<feature type="modified residue" description="Phosphotyrosine" evidence="1">
    <location>
        <position position="173"/>
    </location>
</feature>
<dbReference type="EC" id="2.7.11.24" evidence="3"/>
<dbReference type="EMBL" id="AAEY01000013">
    <property type="protein sequence ID" value="EAL21920.1"/>
    <property type="molecule type" value="Genomic_DNA"/>
</dbReference>
<dbReference type="RefSeq" id="XP_776567.1">
    <property type="nucleotide sequence ID" value="XM_771474.1"/>
</dbReference>
<dbReference type="SMR" id="P0CP69"/>
<dbReference type="EnsemblFungi" id="AAW42642">
    <property type="protein sequence ID" value="AAW42642"/>
    <property type="gene ID" value="CNC06590"/>
</dbReference>
<dbReference type="GeneID" id="4934725"/>
<dbReference type="KEGG" id="cnb:CNBC0610"/>
<dbReference type="VEuPathDB" id="FungiDB:CNBC0610"/>
<dbReference type="HOGENOM" id="CLU_000288_181_1_1"/>
<dbReference type="GO" id="GO:0005737">
    <property type="term" value="C:cytoplasm"/>
    <property type="evidence" value="ECO:0007669"/>
    <property type="project" value="UniProtKB-SubCell"/>
</dbReference>
<dbReference type="GO" id="GO:0005634">
    <property type="term" value="C:nucleus"/>
    <property type="evidence" value="ECO:0007669"/>
    <property type="project" value="UniProtKB-SubCell"/>
</dbReference>
<dbReference type="GO" id="GO:0005524">
    <property type="term" value="F:ATP binding"/>
    <property type="evidence" value="ECO:0007669"/>
    <property type="project" value="UniProtKB-KW"/>
</dbReference>
<dbReference type="GO" id="GO:0004707">
    <property type="term" value="F:MAP kinase activity"/>
    <property type="evidence" value="ECO:0007669"/>
    <property type="project" value="UniProtKB-EC"/>
</dbReference>
<dbReference type="GO" id="GO:0106310">
    <property type="term" value="F:protein serine kinase activity"/>
    <property type="evidence" value="ECO:0007669"/>
    <property type="project" value="RHEA"/>
</dbReference>
<dbReference type="GO" id="GO:0051403">
    <property type="term" value="P:stress-activated MAPK cascade"/>
    <property type="evidence" value="ECO:0007669"/>
    <property type="project" value="InterPro"/>
</dbReference>
<dbReference type="CDD" id="cd07856">
    <property type="entry name" value="STKc_Sty1_Hog1"/>
    <property type="match status" value="1"/>
</dbReference>
<dbReference type="FunFam" id="1.10.510.10:FF:000049">
    <property type="entry name" value="Mitogen-activated protein kinase"/>
    <property type="match status" value="1"/>
</dbReference>
<dbReference type="FunFam" id="3.30.200.20:FF:000050">
    <property type="entry name" value="Mitogen-activated protein kinase"/>
    <property type="match status" value="1"/>
</dbReference>
<dbReference type="Gene3D" id="3.30.200.20">
    <property type="entry name" value="Phosphorylase Kinase, domain 1"/>
    <property type="match status" value="1"/>
</dbReference>
<dbReference type="Gene3D" id="1.10.510.10">
    <property type="entry name" value="Transferase(Phosphotransferase) domain 1"/>
    <property type="match status" value="1"/>
</dbReference>
<dbReference type="InterPro" id="IPR011009">
    <property type="entry name" value="Kinase-like_dom_sf"/>
</dbReference>
<dbReference type="InterPro" id="IPR050117">
    <property type="entry name" value="MAP_kinase"/>
</dbReference>
<dbReference type="InterPro" id="IPR003527">
    <property type="entry name" value="MAP_kinase_CS"/>
</dbReference>
<dbReference type="InterPro" id="IPR008352">
    <property type="entry name" value="MAPK_p38-like"/>
</dbReference>
<dbReference type="InterPro" id="IPR038783">
    <property type="entry name" value="MAPK_Sty1/Hog1"/>
</dbReference>
<dbReference type="InterPro" id="IPR000719">
    <property type="entry name" value="Prot_kinase_dom"/>
</dbReference>
<dbReference type="InterPro" id="IPR017441">
    <property type="entry name" value="Protein_kinase_ATP_BS"/>
</dbReference>
<dbReference type="InterPro" id="IPR008271">
    <property type="entry name" value="Ser/Thr_kinase_AS"/>
</dbReference>
<dbReference type="PANTHER" id="PTHR24055">
    <property type="entry name" value="MITOGEN-ACTIVATED PROTEIN KINASE"/>
    <property type="match status" value="1"/>
</dbReference>
<dbReference type="Pfam" id="PF00069">
    <property type="entry name" value="Pkinase"/>
    <property type="match status" value="1"/>
</dbReference>
<dbReference type="PRINTS" id="PR01773">
    <property type="entry name" value="P38MAPKINASE"/>
</dbReference>
<dbReference type="SMART" id="SM00220">
    <property type="entry name" value="S_TKc"/>
    <property type="match status" value="1"/>
</dbReference>
<dbReference type="SUPFAM" id="SSF56112">
    <property type="entry name" value="Protein kinase-like (PK-like)"/>
    <property type="match status" value="1"/>
</dbReference>
<dbReference type="PROSITE" id="PS01351">
    <property type="entry name" value="MAPK"/>
    <property type="match status" value="1"/>
</dbReference>
<dbReference type="PROSITE" id="PS00107">
    <property type="entry name" value="PROTEIN_KINASE_ATP"/>
    <property type="match status" value="1"/>
</dbReference>
<dbReference type="PROSITE" id="PS50011">
    <property type="entry name" value="PROTEIN_KINASE_DOM"/>
    <property type="match status" value="1"/>
</dbReference>
<dbReference type="PROSITE" id="PS00108">
    <property type="entry name" value="PROTEIN_KINASE_ST"/>
    <property type="match status" value="1"/>
</dbReference>
<organism>
    <name type="scientific">Cryptococcus neoformans var. neoformans serotype D (strain B-3501A)</name>
    <name type="common">Filobasidiella neoformans</name>
    <dbReference type="NCBI Taxonomy" id="283643"/>
    <lineage>
        <taxon>Eukaryota</taxon>
        <taxon>Fungi</taxon>
        <taxon>Dikarya</taxon>
        <taxon>Basidiomycota</taxon>
        <taxon>Agaricomycotina</taxon>
        <taxon>Tremellomycetes</taxon>
        <taxon>Tremellales</taxon>
        <taxon>Cryptococcaceae</taxon>
        <taxon>Cryptococcus</taxon>
        <taxon>Cryptococcus neoformans species complex</taxon>
    </lineage>
</organism>
<name>HOG1_CRYNB</name>
<sequence length="365" mass="41213">MADFVKLSIFGTVFEVTTRYVDLQPVGMGAFGLVCSAKDQLSGTSVAIKKIMKPFSTPVLSKRTYRELKLLKHLRHENIISLSDIFISPLEDIYFVTELLGTDLHRLLTSRPLEKQFIQYFLYQILRGLKYVHSAGVVHRDLKPSNILVNENCDLKICDFGLARIQDPQMTGYVSTRYYRAPEIMLTWQKYDVAVDIWSTGCIFAEMLEGKPLFPGKDHVNQFSIITELLGTPPDDVIQTIASENTLRFVQSLPKREKVPFSTKFPNADPVSLDLLEKMLVFDPRTRISAAEGLAHEYLAPYHDPTDEPVAAEVFDWSFNDADLPVDTWKVMMYSEILDFHNLGDISQNEAEGPVTGEVPAAPAS</sequence>
<gene>
    <name type="primary">HOG1</name>
    <name type="ordered locus">CNBC0610</name>
</gene>
<comment type="function">
    <text evidence="2">Proline-directed serine/threonine-protein kinase involved in a signal transduction pathway that is activated by changes in the osmolarity of the extracellular environment. Controls osmotic regulation of transcription of target genes. Also involved in the response to UV radiation and mediates the sensitivity to fludioxonil, an agricultural fungicide (By similarity).</text>
</comment>
<comment type="catalytic activity">
    <reaction evidence="3">
        <text>L-seryl-[protein] + ATP = O-phospho-L-seryl-[protein] + ADP + H(+)</text>
        <dbReference type="Rhea" id="RHEA:17989"/>
        <dbReference type="Rhea" id="RHEA-COMP:9863"/>
        <dbReference type="Rhea" id="RHEA-COMP:11604"/>
        <dbReference type="ChEBI" id="CHEBI:15378"/>
        <dbReference type="ChEBI" id="CHEBI:29999"/>
        <dbReference type="ChEBI" id="CHEBI:30616"/>
        <dbReference type="ChEBI" id="CHEBI:83421"/>
        <dbReference type="ChEBI" id="CHEBI:456216"/>
        <dbReference type="EC" id="2.7.11.24"/>
    </reaction>
    <physiologicalReaction direction="left-to-right" evidence="3">
        <dbReference type="Rhea" id="RHEA:17990"/>
    </physiologicalReaction>
</comment>
<comment type="catalytic activity">
    <reaction evidence="3">
        <text>L-threonyl-[protein] + ATP = O-phospho-L-threonyl-[protein] + ADP + H(+)</text>
        <dbReference type="Rhea" id="RHEA:46608"/>
        <dbReference type="Rhea" id="RHEA-COMP:11060"/>
        <dbReference type="Rhea" id="RHEA-COMP:11605"/>
        <dbReference type="ChEBI" id="CHEBI:15378"/>
        <dbReference type="ChEBI" id="CHEBI:30013"/>
        <dbReference type="ChEBI" id="CHEBI:30616"/>
        <dbReference type="ChEBI" id="CHEBI:61977"/>
        <dbReference type="ChEBI" id="CHEBI:456216"/>
        <dbReference type="EC" id="2.7.11.24"/>
    </reaction>
    <physiologicalReaction direction="left-to-right" evidence="3">
        <dbReference type="Rhea" id="RHEA:46609"/>
    </physiologicalReaction>
</comment>
<comment type="cofactor">
    <cofactor evidence="4">
        <name>Mg(2+)</name>
        <dbReference type="ChEBI" id="CHEBI:18420"/>
    </cofactor>
</comment>
<comment type="activity regulation">
    <text evidence="1">Activated by tyrosine and threonine phosphorylation.</text>
</comment>
<comment type="subcellular location">
    <subcellularLocation>
        <location evidence="1">Cytoplasm</location>
    </subcellularLocation>
    <subcellularLocation>
        <location evidence="1">Nucleus</location>
    </subcellularLocation>
    <text evidence="1">Predominantly cytoplasmic in unstressed cells but rapidly concentrates within the nucleus in response to hyperosmotic conditions and phosphorylation.</text>
</comment>
<comment type="domain">
    <text evidence="1">The TXY motif contains the threonine and tyrosine residues whose phosphorylation activates the MAP kinases.</text>
</comment>
<comment type="PTM">
    <text evidence="1">Dually phosphorylated on Thr-171 and Tyr-173, which activates the enzyme. Phosphorylated by PBS2 after osmotic stress (By similarity).</text>
</comment>
<comment type="similarity">
    <text evidence="5">Belongs to the protein kinase superfamily. Ser/Thr protein kinase family. MAP kinase subfamily. HOG1 sub-subfamily.</text>
</comment>
<proteinExistence type="inferred from homology"/>
<accession>P0CP69</accession>
<accession>Q55WS9</accession>
<accession>Q5KJG8</accession>
<accession>Q8NKG4</accession>
<reference key="1">
    <citation type="journal article" date="2005" name="Science">
        <title>The genome of the basidiomycetous yeast and human pathogen Cryptococcus neoformans.</title>
        <authorList>
            <person name="Loftus B.J."/>
            <person name="Fung E."/>
            <person name="Roncaglia P."/>
            <person name="Rowley D."/>
            <person name="Amedeo P."/>
            <person name="Bruno D."/>
            <person name="Vamathevan J."/>
            <person name="Miranda M."/>
            <person name="Anderson I.J."/>
            <person name="Fraser J.A."/>
            <person name="Allen J.E."/>
            <person name="Bosdet I.E."/>
            <person name="Brent M.R."/>
            <person name="Chiu R."/>
            <person name="Doering T.L."/>
            <person name="Donlin M.J."/>
            <person name="D'Souza C.A."/>
            <person name="Fox D.S."/>
            <person name="Grinberg V."/>
            <person name="Fu J."/>
            <person name="Fukushima M."/>
            <person name="Haas B.J."/>
            <person name="Huang J.C."/>
            <person name="Janbon G."/>
            <person name="Jones S.J.M."/>
            <person name="Koo H.L."/>
            <person name="Krzywinski M.I."/>
            <person name="Kwon-Chung K.J."/>
            <person name="Lengeler K.B."/>
            <person name="Maiti R."/>
            <person name="Marra M.A."/>
            <person name="Marra R.E."/>
            <person name="Mathewson C.A."/>
            <person name="Mitchell T.G."/>
            <person name="Pertea M."/>
            <person name="Riggs F.R."/>
            <person name="Salzberg S.L."/>
            <person name="Schein J.E."/>
            <person name="Shvartsbeyn A."/>
            <person name="Shin H."/>
            <person name="Shumway M."/>
            <person name="Specht C.A."/>
            <person name="Suh B.B."/>
            <person name="Tenney A."/>
            <person name="Utterback T.R."/>
            <person name="Wickes B.L."/>
            <person name="Wortman J.R."/>
            <person name="Wye N.H."/>
            <person name="Kronstad J.W."/>
            <person name="Lodge J.K."/>
            <person name="Heitman J."/>
            <person name="Davis R.W."/>
            <person name="Fraser C.M."/>
            <person name="Hyman R.W."/>
        </authorList>
    </citation>
    <scope>NUCLEOTIDE SEQUENCE [LARGE SCALE GENOMIC DNA]</scope>
    <source>
        <strain>B-3501A</strain>
    </source>
</reference>
<evidence type="ECO:0000250" key="1"/>
<evidence type="ECO:0000250" key="2">
    <source>
        <dbReference type="UniProtKB" id="P0CP68"/>
    </source>
</evidence>
<evidence type="ECO:0000250" key="3">
    <source>
        <dbReference type="UniProtKB" id="P32485"/>
    </source>
</evidence>
<evidence type="ECO:0000250" key="4">
    <source>
        <dbReference type="UniProtKB" id="Q16539"/>
    </source>
</evidence>
<evidence type="ECO:0000255" key="5">
    <source>
        <dbReference type="PROSITE-ProRule" id="PRU00159"/>
    </source>
</evidence>
<evidence type="ECO:0000255" key="6">
    <source>
        <dbReference type="PROSITE-ProRule" id="PRU10027"/>
    </source>
</evidence>